<accession>Q1CJ86</accession>
<accession>C4GSQ2</accession>
<name>DADA_YERPN</name>
<gene>
    <name evidence="1" type="primary">dadA</name>
    <name type="ordered locus">YPN_1614</name>
    <name type="ORF">YP516_1796</name>
</gene>
<sequence>MRVVILGSGVVGVTSAWYLAKEGHDVTVIDRQDGPAQETSAGNAGQISPGYAAPWAAPGVPLKAIKWMFQRHAPLAIRLDGSSLQLRWMWQMLRNCDTSHYMVNKSRMVRLAEYSRDCLKDLRAATGIQYEGRQGGTLQLFRTEQQFDNAAKDIAVLDDAGVPYSLLTAEQLATVEPALAKVAHKLTGGLRLPNDETGDCKLFTERLAKMAEQAGVKFIFNRSVDKLLVEGDQIAGVLCGDDIIKADAYVVAFGAYSTALLAGLVSIPVYPLKGYSLTIPITDPASAPFSTVLDETYKIAITRFDDRIRVGGMAEIVGFNTQLAPARRETLEMVVRDLYPHGGDISQAVFWSGLRPMTPDGTPIVGRTPLKNLYLNTGHGTLGWTMACGSGQLLADIIQGRRPAIVADDLSVARYRAGFQPLNIAPLHDIHPIR</sequence>
<evidence type="ECO:0000255" key="1">
    <source>
        <dbReference type="HAMAP-Rule" id="MF_01202"/>
    </source>
</evidence>
<proteinExistence type="inferred from homology"/>
<keyword id="KW-0274">FAD</keyword>
<keyword id="KW-0285">Flavoprotein</keyword>
<keyword id="KW-0560">Oxidoreductase</keyword>
<reference key="1">
    <citation type="journal article" date="2006" name="J. Bacteriol.">
        <title>Complete genome sequence of Yersinia pestis strains Antiqua and Nepal516: evidence of gene reduction in an emerging pathogen.</title>
        <authorList>
            <person name="Chain P.S.G."/>
            <person name="Hu P."/>
            <person name="Malfatti S.A."/>
            <person name="Radnedge L."/>
            <person name="Larimer F."/>
            <person name="Vergez L.M."/>
            <person name="Worsham P."/>
            <person name="Chu M.C."/>
            <person name="Andersen G.L."/>
        </authorList>
    </citation>
    <scope>NUCLEOTIDE SEQUENCE [LARGE SCALE GENOMIC DNA]</scope>
    <source>
        <strain>Nepal516</strain>
    </source>
</reference>
<reference key="2">
    <citation type="submission" date="2009-04" db="EMBL/GenBank/DDBJ databases">
        <title>Yersinia pestis Nepal516A whole genome shotgun sequencing project.</title>
        <authorList>
            <person name="Plunkett G. III"/>
            <person name="Anderson B.D."/>
            <person name="Baumler D.J."/>
            <person name="Burland V."/>
            <person name="Cabot E.L."/>
            <person name="Glasner J.D."/>
            <person name="Mau B."/>
            <person name="Neeno-Eckwall E."/>
            <person name="Perna N.T."/>
            <person name="Munk A.C."/>
            <person name="Tapia R."/>
            <person name="Green L.D."/>
            <person name="Rogers Y.C."/>
            <person name="Detter J.C."/>
            <person name="Bruce D.C."/>
            <person name="Brettin T.S."/>
        </authorList>
    </citation>
    <scope>NUCLEOTIDE SEQUENCE [LARGE SCALE GENOMIC DNA]</scope>
    <source>
        <strain>Nepal516</strain>
    </source>
</reference>
<comment type="function">
    <text evidence="1">Oxidative deamination of D-amino acids.</text>
</comment>
<comment type="catalytic activity">
    <reaction evidence="1">
        <text>a D-alpha-amino acid + A + H2O = a 2-oxocarboxylate + AH2 + NH4(+)</text>
        <dbReference type="Rhea" id="RHEA:18125"/>
        <dbReference type="ChEBI" id="CHEBI:13193"/>
        <dbReference type="ChEBI" id="CHEBI:15377"/>
        <dbReference type="ChEBI" id="CHEBI:17499"/>
        <dbReference type="ChEBI" id="CHEBI:28938"/>
        <dbReference type="ChEBI" id="CHEBI:35179"/>
        <dbReference type="ChEBI" id="CHEBI:59871"/>
    </reaction>
</comment>
<comment type="cofactor">
    <cofactor evidence="1">
        <name>FAD</name>
        <dbReference type="ChEBI" id="CHEBI:57692"/>
    </cofactor>
</comment>
<comment type="pathway">
    <text>Amino-acid degradation; D-alanine degradation; NH(3) and pyruvate from D-alanine: step 1/1.</text>
</comment>
<comment type="similarity">
    <text evidence="1">Belongs to the DadA oxidoreductase family.</text>
</comment>
<organism>
    <name type="scientific">Yersinia pestis bv. Antiqua (strain Nepal516)</name>
    <dbReference type="NCBI Taxonomy" id="377628"/>
    <lineage>
        <taxon>Bacteria</taxon>
        <taxon>Pseudomonadati</taxon>
        <taxon>Pseudomonadota</taxon>
        <taxon>Gammaproteobacteria</taxon>
        <taxon>Enterobacterales</taxon>
        <taxon>Yersiniaceae</taxon>
        <taxon>Yersinia</taxon>
    </lineage>
</organism>
<feature type="chain" id="PRO_1000066127" description="D-amino acid dehydrogenase">
    <location>
        <begin position="1"/>
        <end position="434"/>
    </location>
</feature>
<feature type="binding site" evidence="1">
    <location>
        <begin position="3"/>
        <end position="17"/>
    </location>
    <ligand>
        <name>FAD</name>
        <dbReference type="ChEBI" id="CHEBI:57692"/>
    </ligand>
</feature>
<dbReference type="EC" id="1.4.99.-" evidence="1"/>
<dbReference type="EMBL" id="CP000305">
    <property type="protein sequence ID" value="ABG17944.1"/>
    <property type="molecule type" value="Genomic_DNA"/>
</dbReference>
<dbReference type="EMBL" id="ACNQ01000009">
    <property type="protein sequence ID" value="EEO77062.1"/>
    <property type="molecule type" value="Genomic_DNA"/>
</dbReference>
<dbReference type="RefSeq" id="WP_002211686.1">
    <property type="nucleotide sequence ID" value="NZ_ACNQ01000009.1"/>
</dbReference>
<dbReference type="SMR" id="Q1CJ86"/>
<dbReference type="KEGG" id="ypn:YPN_1614"/>
<dbReference type="HOGENOM" id="CLU_007884_9_2_6"/>
<dbReference type="UniPathway" id="UPA00043">
    <property type="reaction ID" value="UER00498"/>
</dbReference>
<dbReference type="Proteomes" id="UP000008936">
    <property type="component" value="Chromosome"/>
</dbReference>
<dbReference type="GO" id="GO:0005737">
    <property type="term" value="C:cytoplasm"/>
    <property type="evidence" value="ECO:0007669"/>
    <property type="project" value="TreeGrafter"/>
</dbReference>
<dbReference type="GO" id="GO:0005886">
    <property type="term" value="C:plasma membrane"/>
    <property type="evidence" value="ECO:0007669"/>
    <property type="project" value="TreeGrafter"/>
</dbReference>
<dbReference type="GO" id="GO:0008718">
    <property type="term" value="F:D-amino-acid dehydrogenase activity"/>
    <property type="evidence" value="ECO:0007669"/>
    <property type="project" value="UniProtKB-UniRule"/>
</dbReference>
<dbReference type="GO" id="GO:0055130">
    <property type="term" value="P:D-alanine catabolic process"/>
    <property type="evidence" value="ECO:0007669"/>
    <property type="project" value="UniProtKB-UniPathway"/>
</dbReference>
<dbReference type="FunFam" id="3.50.50.60:FF:000020">
    <property type="entry name" value="D-amino acid dehydrogenase"/>
    <property type="match status" value="1"/>
</dbReference>
<dbReference type="Gene3D" id="3.30.9.10">
    <property type="entry name" value="D-Amino Acid Oxidase, subunit A, domain 2"/>
    <property type="match status" value="1"/>
</dbReference>
<dbReference type="Gene3D" id="3.50.50.60">
    <property type="entry name" value="FAD/NAD(P)-binding domain"/>
    <property type="match status" value="2"/>
</dbReference>
<dbReference type="HAMAP" id="MF_01202">
    <property type="entry name" value="DadA"/>
    <property type="match status" value="1"/>
</dbReference>
<dbReference type="InterPro" id="IPR023080">
    <property type="entry name" value="DadA"/>
</dbReference>
<dbReference type="InterPro" id="IPR006076">
    <property type="entry name" value="FAD-dep_OxRdtase"/>
</dbReference>
<dbReference type="InterPro" id="IPR036188">
    <property type="entry name" value="FAD/NAD-bd_sf"/>
</dbReference>
<dbReference type="NCBIfam" id="NF001933">
    <property type="entry name" value="PRK00711.1"/>
    <property type="match status" value="1"/>
</dbReference>
<dbReference type="PANTHER" id="PTHR13847:SF280">
    <property type="entry name" value="D-AMINO ACID DEHYDROGENASE"/>
    <property type="match status" value="1"/>
</dbReference>
<dbReference type="PANTHER" id="PTHR13847">
    <property type="entry name" value="SARCOSINE DEHYDROGENASE-RELATED"/>
    <property type="match status" value="1"/>
</dbReference>
<dbReference type="Pfam" id="PF01266">
    <property type="entry name" value="DAO"/>
    <property type="match status" value="1"/>
</dbReference>
<dbReference type="SUPFAM" id="SSF54373">
    <property type="entry name" value="FAD-linked reductases, C-terminal domain"/>
    <property type="match status" value="1"/>
</dbReference>
<dbReference type="SUPFAM" id="SSF51905">
    <property type="entry name" value="FAD/NAD(P)-binding domain"/>
    <property type="match status" value="1"/>
</dbReference>
<protein>
    <recommendedName>
        <fullName evidence="1">D-amino acid dehydrogenase</fullName>
        <ecNumber evidence="1">1.4.99.-</ecNumber>
    </recommendedName>
</protein>